<comment type="function">
    <text evidence="1">Cell wall formation.</text>
</comment>
<comment type="catalytic activity">
    <reaction evidence="1">
        <text>UDP-N-acetyl-alpha-D-muramate + L-alanine + ATP = UDP-N-acetyl-alpha-D-muramoyl-L-alanine + ADP + phosphate + H(+)</text>
        <dbReference type="Rhea" id="RHEA:23372"/>
        <dbReference type="ChEBI" id="CHEBI:15378"/>
        <dbReference type="ChEBI" id="CHEBI:30616"/>
        <dbReference type="ChEBI" id="CHEBI:43474"/>
        <dbReference type="ChEBI" id="CHEBI:57972"/>
        <dbReference type="ChEBI" id="CHEBI:70757"/>
        <dbReference type="ChEBI" id="CHEBI:83898"/>
        <dbReference type="ChEBI" id="CHEBI:456216"/>
        <dbReference type="EC" id="6.3.2.8"/>
    </reaction>
</comment>
<comment type="pathway">
    <text evidence="1">Cell wall biogenesis; peptidoglycan biosynthesis.</text>
</comment>
<comment type="subcellular location">
    <subcellularLocation>
        <location evidence="1">Cytoplasm</location>
    </subcellularLocation>
</comment>
<comment type="similarity">
    <text evidence="1">Belongs to the MurCDEF family.</text>
</comment>
<organism>
    <name type="scientific">Streptococcus pneumoniae serotype 2 (strain D39 / NCTC 7466)</name>
    <dbReference type="NCBI Taxonomy" id="373153"/>
    <lineage>
        <taxon>Bacteria</taxon>
        <taxon>Bacillati</taxon>
        <taxon>Bacillota</taxon>
        <taxon>Bacilli</taxon>
        <taxon>Lactobacillales</taxon>
        <taxon>Streptococcaceae</taxon>
        <taxon>Streptococcus</taxon>
    </lineage>
</organism>
<name>MURC_STRP2</name>
<dbReference type="EC" id="6.3.2.8" evidence="1"/>
<dbReference type="EMBL" id="CP000410">
    <property type="protein sequence ID" value="ABJ53680.1"/>
    <property type="molecule type" value="Genomic_DNA"/>
</dbReference>
<dbReference type="RefSeq" id="WP_000048090.1">
    <property type="nucleotide sequence ID" value="NZ_JAMLJR010000008.1"/>
</dbReference>
<dbReference type="SMR" id="Q04HS5"/>
<dbReference type="PaxDb" id="373153-SPD_1349"/>
<dbReference type="KEGG" id="spd:SPD_1349"/>
<dbReference type="eggNOG" id="COG0773">
    <property type="taxonomic scope" value="Bacteria"/>
</dbReference>
<dbReference type="HOGENOM" id="CLU_028104_1_0_9"/>
<dbReference type="BioCyc" id="SPNE373153:G1G6V-1455-MONOMER"/>
<dbReference type="UniPathway" id="UPA00219"/>
<dbReference type="Proteomes" id="UP000001452">
    <property type="component" value="Chromosome"/>
</dbReference>
<dbReference type="GO" id="GO:0005737">
    <property type="term" value="C:cytoplasm"/>
    <property type="evidence" value="ECO:0007669"/>
    <property type="project" value="UniProtKB-SubCell"/>
</dbReference>
<dbReference type="GO" id="GO:0005524">
    <property type="term" value="F:ATP binding"/>
    <property type="evidence" value="ECO:0007669"/>
    <property type="project" value="UniProtKB-UniRule"/>
</dbReference>
<dbReference type="GO" id="GO:0008763">
    <property type="term" value="F:UDP-N-acetylmuramate-L-alanine ligase activity"/>
    <property type="evidence" value="ECO:0007669"/>
    <property type="project" value="UniProtKB-UniRule"/>
</dbReference>
<dbReference type="GO" id="GO:0051301">
    <property type="term" value="P:cell division"/>
    <property type="evidence" value="ECO:0007669"/>
    <property type="project" value="UniProtKB-KW"/>
</dbReference>
<dbReference type="GO" id="GO:0071555">
    <property type="term" value="P:cell wall organization"/>
    <property type="evidence" value="ECO:0007669"/>
    <property type="project" value="UniProtKB-KW"/>
</dbReference>
<dbReference type="GO" id="GO:0009252">
    <property type="term" value="P:peptidoglycan biosynthetic process"/>
    <property type="evidence" value="ECO:0007669"/>
    <property type="project" value="UniProtKB-UniRule"/>
</dbReference>
<dbReference type="GO" id="GO:0008360">
    <property type="term" value="P:regulation of cell shape"/>
    <property type="evidence" value="ECO:0007669"/>
    <property type="project" value="UniProtKB-KW"/>
</dbReference>
<dbReference type="Gene3D" id="3.90.190.20">
    <property type="entry name" value="Mur ligase, C-terminal domain"/>
    <property type="match status" value="1"/>
</dbReference>
<dbReference type="Gene3D" id="3.40.1190.10">
    <property type="entry name" value="Mur-like, catalytic domain"/>
    <property type="match status" value="1"/>
</dbReference>
<dbReference type="Gene3D" id="3.40.50.720">
    <property type="entry name" value="NAD(P)-binding Rossmann-like Domain"/>
    <property type="match status" value="1"/>
</dbReference>
<dbReference type="HAMAP" id="MF_00046">
    <property type="entry name" value="MurC"/>
    <property type="match status" value="1"/>
</dbReference>
<dbReference type="InterPro" id="IPR036565">
    <property type="entry name" value="Mur-like_cat_sf"/>
</dbReference>
<dbReference type="InterPro" id="IPR004101">
    <property type="entry name" value="Mur_ligase_C"/>
</dbReference>
<dbReference type="InterPro" id="IPR036615">
    <property type="entry name" value="Mur_ligase_C_dom_sf"/>
</dbReference>
<dbReference type="InterPro" id="IPR013221">
    <property type="entry name" value="Mur_ligase_cen"/>
</dbReference>
<dbReference type="InterPro" id="IPR000713">
    <property type="entry name" value="Mur_ligase_N"/>
</dbReference>
<dbReference type="InterPro" id="IPR050061">
    <property type="entry name" value="MurCDEF_pg_biosynth"/>
</dbReference>
<dbReference type="InterPro" id="IPR005758">
    <property type="entry name" value="UDP-N-AcMur_Ala_ligase_MurC"/>
</dbReference>
<dbReference type="NCBIfam" id="TIGR01082">
    <property type="entry name" value="murC"/>
    <property type="match status" value="1"/>
</dbReference>
<dbReference type="PANTHER" id="PTHR43445:SF3">
    <property type="entry name" value="UDP-N-ACETYLMURAMATE--L-ALANINE LIGASE"/>
    <property type="match status" value="1"/>
</dbReference>
<dbReference type="PANTHER" id="PTHR43445">
    <property type="entry name" value="UDP-N-ACETYLMURAMATE--L-ALANINE LIGASE-RELATED"/>
    <property type="match status" value="1"/>
</dbReference>
<dbReference type="Pfam" id="PF01225">
    <property type="entry name" value="Mur_ligase"/>
    <property type="match status" value="1"/>
</dbReference>
<dbReference type="Pfam" id="PF02875">
    <property type="entry name" value="Mur_ligase_C"/>
    <property type="match status" value="1"/>
</dbReference>
<dbReference type="Pfam" id="PF08245">
    <property type="entry name" value="Mur_ligase_M"/>
    <property type="match status" value="1"/>
</dbReference>
<dbReference type="SUPFAM" id="SSF51984">
    <property type="entry name" value="MurCD N-terminal domain"/>
    <property type="match status" value="1"/>
</dbReference>
<dbReference type="SUPFAM" id="SSF53623">
    <property type="entry name" value="MurD-like peptide ligases, catalytic domain"/>
    <property type="match status" value="1"/>
</dbReference>
<dbReference type="SUPFAM" id="SSF53244">
    <property type="entry name" value="MurD-like peptide ligases, peptide-binding domain"/>
    <property type="match status" value="1"/>
</dbReference>
<gene>
    <name evidence="1" type="primary">murC</name>
    <name type="ordered locus">SPD_1349</name>
</gene>
<accession>Q04HS5</accession>
<evidence type="ECO:0000255" key="1">
    <source>
        <dbReference type="HAMAP-Rule" id="MF_00046"/>
    </source>
</evidence>
<reference key="1">
    <citation type="journal article" date="2007" name="J. Bacteriol.">
        <title>Genome sequence of Avery's virulent serotype 2 strain D39 of Streptococcus pneumoniae and comparison with that of unencapsulated laboratory strain R6.</title>
        <authorList>
            <person name="Lanie J.A."/>
            <person name="Ng W.-L."/>
            <person name="Kazmierczak K.M."/>
            <person name="Andrzejewski T.M."/>
            <person name="Davidsen T.M."/>
            <person name="Wayne K.J."/>
            <person name="Tettelin H."/>
            <person name="Glass J.I."/>
            <person name="Winkler M.E."/>
        </authorList>
    </citation>
    <scope>NUCLEOTIDE SEQUENCE [LARGE SCALE GENOMIC DNA]</scope>
    <source>
        <strain>D39 / NCTC 7466</strain>
    </source>
</reference>
<proteinExistence type="inferred from homology"/>
<feature type="chain" id="PRO_1000004420" description="UDP-N-acetylmuramate--L-alanine ligase">
    <location>
        <begin position="1"/>
        <end position="444"/>
    </location>
</feature>
<feature type="binding site" evidence="1">
    <location>
        <begin position="110"/>
        <end position="116"/>
    </location>
    <ligand>
        <name>ATP</name>
        <dbReference type="ChEBI" id="CHEBI:30616"/>
    </ligand>
</feature>
<sequence length="444" mass="49874">MSKTYHFIGIKGSGMSALALMLHQMGHKVQGSDVEKYYFTQRGLEQAGITILPFDEKNLDGDMEIIAGNAFRPDNNVEIAYADQNGISYKRYHEFLGSFMRDFVSMGVAGAHGKTSTTGMLSHVLSHITDTSFLIGDGTGRGSANAKYFVFESDEYERHFMPYHPEYSIITNIDFDHPDYFTSLEDVFNAFNDYAKQITKGLFVYGEDAELRKITSDAPIYYYGFEAEGNDFVASDLLRSTTGSTFTVHFRGQNLGQFHIPTFGRHNIMNATAVIGLLYTAGFDLNLVREHLKTFAGVKRRFTEKIVNDTVIIDDFAHHPTEIIATLDAARQKYPSKEIVAVFQPHTFTRTIALLDDFAHALNQADAVYLAQIYGSAREVDHGDVKVEDLANKINKKHQVITVENVSPLLDHDNAVYVFMGAGDIQTYEYSFERLLSNLTSNVQ</sequence>
<protein>
    <recommendedName>
        <fullName evidence="1">UDP-N-acetylmuramate--L-alanine ligase</fullName>
        <ecNumber evidence="1">6.3.2.8</ecNumber>
    </recommendedName>
    <alternativeName>
        <fullName evidence="1">UDP-N-acetylmuramoyl-L-alanine synthetase</fullName>
    </alternativeName>
</protein>
<keyword id="KW-0067">ATP-binding</keyword>
<keyword id="KW-0131">Cell cycle</keyword>
<keyword id="KW-0132">Cell division</keyword>
<keyword id="KW-0133">Cell shape</keyword>
<keyword id="KW-0961">Cell wall biogenesis/degradation</keyword>
<keyword id="KW-0963">Cytoplasm</keyword>
<keyword id="KW-0436">Ligase</keyword>
<keyword id="KW-0547">Nucleotide-binding</keyword>
<keyword id="KW-0573">Peptidoglycan synthesis</keyword>
<keyword id="KW-1185">Reference proteome</keyword>